<comment type="similarity">
    <text evidence="1">Belongs to the UPF0145 family.</text>
</comment>
<protein>
    <recommendedName>
        <fullName evidence="1">UPF0145 protein NE1032</fullName>
    </recommendedName>
</protein>
<feature type="chain" id="PRO_0000225834" description="UPF0145 protein NE1032">
    <location>
        <begin position="1"/>
        <end position="106"/>
    </location>
</feature>
<keyword id="KW-1185">Reference proteome</keyword>
<dbReference type="EMBL" id="AL954747">
    <property type="protein sequence ID" value="CAD84943.1"/>
    <property type="molecule type" value="Genomic_DNA"/>
</dbReference>
<dbReference type="RefSeq" id="WP_011111641.1">
    <property type="nucleotide sequence ID" value="NC_004757.1"/>
</dbReference>
<dbReference type="SMR" id="Q82VN4"/>
<dbReference type="STRING" id="228410.NE1032"/>
<dbReference type="GeneID" id="87104223"/>
<dbReference type="KEGG" id="neu:NE1032"/>
<dbReference type="eggNOG" id="COG0393">
    <property type="taxonomic scope" value="Bacteria"/>
</dbReference>
<dbReference type="HOGENOM" id="CLU_117144_3_2_4"/>
<dbReference type="OrthoDB" id="9796448at2"/>
<dbReference type="PhylomeDB" id="Q82VN4"/>
<dbReference type="Proteomes" id="UP000001416">
    <property type="component" value="Chromosome"/>
</dbReference>
<dbReference type="Gene3D" id="3.30.110.70">
    <property type="entry name" value="Hypothetical protein apc22750. Chain B"/>
    <property type="match status" value="1"/>
</dbReference>
<dbReference type="HAMAP" id="MF_00338">
    <property type="entry name" value="UPF0145"/>
    <property type="match status" value="1"/>
</dbReference>
<dbReference type="InterPro" id="IPR035439">
    <property type="entry name" value="UPF0145_dom_sf"/>
</dbReference>
<dbReference type="InterPro" id="IPR002765">
    <property type="entry name" value="UPF0145_YbjQ-like"/>
</dbReference>
<dbReference type="NCBIfam" id="NF002776">
    <property type="entry name" value="PRK02877.1"/>
    <property type="match status" value="1"/>
</dbReference>
<dbReference type="PANTHER" id="PTHR34068">
    <property type="entry name" value="UPF0145 PROTEIN YBJQ"/>
    <property type="match status" value="1"/>
</dbReference>
<dbReference type="PANTHER" id="PTHR34068:SF1">
    <property type="entry name" value="UPF0145 PROTEIN YBJQ"/>
    <property type="match status" value="1"/>
</dbReference>
<dbReference type="Pfam" id="PF01906">
    <property type="entry name" value="YbjQ_1"/>
    <property type="match status" value="1"/>
</dbReference>
<dbReference type="SUPFAM" id="SSF117782">
    <property type="entry name" value="YbjQ-like"/>
    <property type="match status" value="1"/>
</dbReference>
<reference key="1">
    <citation type="journal article" date="2003" name="J. Bacteriol.">
        <title>Complete genome sequence of the ammonia-oxidizing bacterium and obligate chemolithoautotroph Nitrosomonas europaea.</title>
        <authorList>
            <person name="Chain P."/>
            <person name="Lamerdin J.E."/>
            <person name="Larimer F.W."/>
            <person name="Regala W."/>
            <person name="Lao V."/>
            <person name="Land M.L."/>
            <person name="Hauser L."/>
            <person name="Hooper A.B."/>
            <person name="Klotz M.G."/>
            <person name="Norton J."/>
            <person name="Sayavedra-Soto L.A."/>
            <person name="Arciero D.M."/>
            <person name="Hommes N.G."/>
            <person name="Whittaker M.M."/>
            <person name="Arp D.J."/>
        </authorList>
    </citation>
    <scope>NUCLEOTIDE SEQUENCE [LARGE SCALE GENOMIC DNA]</scope>
    <source>
        <strain>ATCC 19718 / CIP 103999 / KCTC 2705 / NBRC 14298</strain>
    </source>
</reference>
<sequence length="106" mass="11462">MLLTTTPVIEGKRITHYYGIVAGEAVLGANVLKDLFAGIRDFVGGRSGTYEKELQHAREIALEELQENAHRLGANAVIGIDIDYEVLGKENGMLMVSVSGTAVFVE</sequence>
<gene>
    <name type="ordered locus">NE1032</name>
</gene>
<accession>Q82VN4</accession>
<evidence type="ECO:0000255" key="1">
    <source>
        <dbReference type="HAMAP-Rule" id="MF_00338"/>
    </source>
</evidence>
<proteinExistence type="inferred from homology"/>
<name>Y1032_NITEU</name>
<organism>
    <name type="scientific">Nitrosomonas europaea (strain ATCC 19718 / CIP 103999 / KCTC 2705 / NBRC 14298)</name>
    <dbReference type="NCBI Taxonomy" id="228410"/>
    <lineage>
        <taxon>Bacteria</taxon>
        <taxon>Pseudomonadati</taxon>
        <taxon>Pseudomonadota</taxon>
        <taxon>Betaproteobacteria</taxon>
        <taxon>Nitrosomonadales</taxon>
        <taxon>Nitrosomonadaceae</taxon>
        <taxon>Nitrosomonas</taxon>
    </lineage>
</organism>